<protein>
    <recommendedName>
        <fullName evidence="2">Ribosome biogenesis protein YTM1</fullName>
    </recommendedName>
    <alternativeName>
        <fullName>Microtubule-associated protein YTM1</fullName>
    </alternativeName>
</protein>
<evidence type="ECO:0000250" key="1"/>
<evidence type="ECO:0000255" key="2">
    <source>
        <dbReference type="HAMAP-Rule" id="MF_03029"/>
    </source>
</evidence>
<comment type="function">
    <text evidence="2">Component of the NOP7 complex, which is required for maturation of the 25S and 5.8S ribosomal RNAs and formation of the 60S ribosome.</text>
</comment>
<comment type="subunit">
    <text evidence="2">Component of the NOP7 complex, composed of ERB1, NOP7 and YTM1. The complex is held together by ERB1, which interacts with NOP7 via its N-terminal domain and with YTM1 via a high-affinity interaction between the seven-bladed beta-propeller domains of the 2 proteins. The NOP7 complex associates with the 66S pre-ribosome. Interacts (via UBL domain) with MDN1 (via VWFA/MIDAS domain).</text>
</comment>
<comment type="subcellular location">
    <subcellularLocation>
        <location evidence="2">Nucleus</location>
        <location evidence="2">Nucleolus</location>
    </subcellularLocation>
    <subcellularLocation>
        <location evidence="2">Nucleus</location>
        <location evidence="2">Nucleoplasm</location>
    </subcellularLocation>
</comment>
<comment type="similarity">
    <text evidence="2">Belongs to the WD repeat WDR12/YTM1 family.</text>
</comment>
<reference key="1">
    <citation type="journal article" date="2007" name="Proc. Natl. Acad. Sci. U.S.A.">
        <title>Genome sequencing and comparative analysis of Saccharomyces cerevisiae strain YJM789.</title>
        <authorList>
            <person name="Wei W."/>
            <person name="McCusker J.H."/>
            <person name="Hyman R.W."/>
            <person name="Jones T."/>
            <person name="Ning Y."/>
            <person name="Cao Z."/>
            <person name="Gu Z."/>
            <person name="Bruno D."/>
            <person name="Miranda M."/>
            <person name="Nguyen M."/>
            <person name="Wilhelmy J."/>
            <person name="Komp C."/>
            <person name="Tamse R."/>
            <person name="Wang X."/>
            <person name="Jia P."/>
            <person name="Luedi P."/>
            <person name="Oefner P.J."/>
            <person name="David L."/>
            <person name="Dietrich F.S."/>
            <person name="Li Y."/>
            <person name="Davis R.W."/>
            <person name="Steinmetz L.M."/>
        </authorList>
    </citation>
    <scope>NUCLEOTIDE SEQUENCE [LARGE SCALE GENOMIC DNA]</scope>
    <source>
        <strain>YJM789</strain>
    </source>
</reference>
<keyword id="KW-0539">Nucleus</keyword>
<keyword id="KW-0677">Repeat</keyword>
<keyword id="KW-0690">Ribosome biogenesis</keyword>
<keyword id="KW-0698">rRNA processing</keyword>
<keyword id="KW-0853">WD repeat</keyword>
<proteinExistence type="inferred from homology"/>
<dbReference type="EMBL" id="AAFW02000032">
    <property type="protein sequence ID" value="EDN63599.1"/>
    <property type="molecule type" value="Genomic_DNA"/>
</dbReference>
<dbReference type="EMDB" id="EMD-24290"/>
<dbReference type="SMR" id="A6ZPA9"/>
<dbReference type="IntAct" id="A6ZPA9">
    <property type="interactions" value="2"/>
</dbReference>
<dbReference type="MINT" id="A6ZPA9"/>
<dbReference type="HOGENOM" id="CLU_000288_57_0_1"/>
<dbReference type="Proteomes" id="UP000007060">
    <property type="component" value="Unassembled WGS sequence"/>
</dbReference>
<dbReference type="GO" id="GO:0005654">
    <property type="term" value="C:nucleoplasm"/>
    <property type="evidence" value="ECO:0007669"/>
    <property type="project" value="UniProtKB-SubCell"/>
</dbReference>
<dbReference type="GO" id="GO:0070545">
    <property type="term" value="C:PeBoW complex"/>
    <property type="evidence" value="ECO:0007669"/>
    <property type="project" value="TreeGrafter"/>
</dbReference>
<dbReference type="GO" id="GO:0030687">
    <property type="term" value="C:preribosome, large subunit precursor"/>
    <property type="evidence" value="ECO:0007669"/>
    <property type="project" value="UniProtKB-UniRule"/>
</dbReference>
<dbReference type="GO" id="GO:0043021">
    <property type="term" value="F:ribonucleoprotein complex binding"/>
    <property type="evidence" value="ECO:0007669"/>
    <property type="project" value="UniProtKB-UniRule"/>
</dbReference>
<dbReference type="GO" id="GO:0000466">
    <property type="term" value="P:maturation of 5.8S rRNA from tricistronic rRNA transcript (SSU-rRNA, 5.8S rRNA, LSU-rRNA)"/>
    <property type="evidence" value="ECO:0007669"/>
    <property type="project" value="UniProtKB-UniRule"/>
</dbReference>
<dbReference type="GO" id="GO:0000463">
    <property type="term" value="P:maturation of LSU-rRNA from tricistronic rRNA transcript (SSU-rRNA, 5.8S rRNA, LSU-rRNA)"/>
    <property type="evidence" value="ECO:0007669"/>
    <property type="project" value="UniProtKB-UniRule"/>
</dbReference>
<dbReference type="CDD" id="cd00200">
    <property type="entry name" value="WD40"/>
    <property type="match status" value="1"/>
</dbReference>
<dbReference type="FunFam" id="2.130.10.10:FF:000706">
    <property type="entry name" value="Ribosome biogenesis protein YTM1"/>
    <property type="match status" value="1"/>
</dbReference>
<dbReference type="Gene3D" id="2.130.10.10">
    <property type="entry name" value="YVTN repeat-like/Quinoprotein amine dehydrogenase"/>
    <property type="match status" value="1"/>
</dbReference>
<dbReference type="HAMAP" id="MF_03029">
    <property type="entry name" value="WDR12"/>
    <property type="match status" value="1"/>
</dbReference>
<dbReference type="InterPro" id="IPR020472">
    <property type="entry name" value="G-protein_beta_WD-40_rep"/>
</dbReference>
<dbReference type="InterPro" id="IPR012972">
    <property type="entry name" value="NLE"/>
</dbReference>
<dbReference type="InterPro" id="IPR015943">
    <property type="entry name" value="WD40/YVTN_repeat-like_dom_sf"/>
</dbReference>
<dbReference type="InterPro" id="IPR019775">
    <property type="entry name" value="WD40_repeat_CS"/>
</dbReference>
<dbReference type="InterPro" id="IPR036322">
    <property type="entry name" value="WD40_repeat_dom_sf"/>
</dbReference>
<dbReference type="InterPro" id="IPR001680">
    <property type="entry name" value="WD40_rpt"/>
</dbReference>
<dbReference type="InterPro" id="IPR028599">
    <property type="entry name" value="WDR12/Ytm1"/>
</dbReference>
<dbReference type="PANTHER" id="PTHR19855:SF11">
    <property type="entry name" value="RIBOSOME BIOGENESIS PROTEIN WDR12"/>
    <property type="match status" value="1"/>
</dbReference>
<dbReference type="PANTHER" id="PTHR19855">
    <property type="entry name" value="WD40 REPEAT PROTEIN 12, 37"/>
    <property type="match status" value="1"/>
</dbReference>
<dbReference type="Pfam" id="PF08154">
    <property type="entry name" value="NLE"/>
    <property type="match status" value="1"/>
</dbReference>
<dbReference type="Pfam" id="PF00400">
    <property type="entry name" value="WD40"/>
    <property type="match status" value="5"/>
</dbReference>
<dbReference type="PRINTS" id="PR00320">
    <property type="entry name" value="GPROTEINBRPT"/>
</dbReference>
<dbReference type="SMART" id="SM00320">
    <property type="entry name" value="WD40"/>
    <property type="match status" value="7"/>
</dbReference>
<dbReference type="SUPFAM" id="SSF50978">
    <property type="entry name" value="WD40 repeat-like"/>
    <property type="match status" value="1"/>
</dbReference>
<dbReference type="PROSITE" id="PS00678">
    <property type="entry name" value="WD_REPEATS_1"/>
    <property type="match status" value="2"/>
</dbReference>
<dbReference type="PROSITE" id="PS50082">
    <property type="entry name" value="WD_REPEATS_2"/>
    <property type="match status" value="5"/>
</dbReference>
<dbReference type="PROSITE" id="PS50294">
    <property type="entry name" value="WD_REPEATS_REGION"/>
    <property type="match status" value="1"/>
</dbReference>
<gene>
    <name evidence="2" type="primary">YTM1</name>
    <name type="ORF">SCY_5324</name>
</gene>
<organism>
    <name type="scientific">Saccharomyces cerevisiae (strain YJM789)</name>
    <name type="common">Baker's yeast</name>
    <dbReference type="NCBI Taxonomy" id="307796"/>
    <lineage>
        <taxon>Eukaryota</taxon>
        <taxon>Fungi</taxon>
        <taxon>Dikarya</taxon>
        <taxon>Ascomycota</taxon>
        <taxon>Saccharomycotina</taxon>
        <taxon>Saccharomycetes</taxon>
        <taxon>Saccharomycetales</taxon>
        <taxon>Saccharomycetaceae</taxon>
        <taxon>Saccharomyces</taxon>
    </lineage>
</organism>
<name>YTM1_YEAS7</name>
<accession>A6ZPA9</accession>
<feature type="chain" id="PRO_0000369604" description="Ribosome biogenesis protein YTM1">
    <location>
        <begin position="1"/>
        <end position="460"/>
    </location>
</feature>
<feature type="repeat" description="WD 1">
    <location>
        <begin position="101"/>
        <end position="140"/>
    </location>
</feature>
<feature type="repeat" description="WD 2">
    <location>
        <begin position="142"/>
        <end position="180"/>
    </location>
</feature>
<feature type="repeat" description="WD 3">
    <location>
        <begin position="206"/>
        <end position="244"/>
    </location>
</feature>
<feature type="repeat" description="WD 4">
    <location>
        <begin position="285"/>
        <end position="325"/>
    </location>
</feature>
<feature type="repeat" description="WD 5">
    <location>
        <begin position="327"/>
        <end position="366"/>
    </location>
</feature>
<feature type="repeat" description="WD 6">
    <location>
        <begin position="373"/>
        <end position="413"/>
    </location>
</feature>
<feature type="repeat" description="WD 7">
    <location>
        <begin position="424"/>
        <end position="460"/>
    </location>
</feature>
<feature type="region of interest" description="Ubiquitin-like (UBL) domain" evidence="2">
    <location>
        <begin position="8"/>
        <end position="89"/>
    </location>
</feature>
<feature type="region of interest" description="Sufficient for interaction with ERB1 and association with 66S pre-ribosomes" evidence="1">
    <location>
        <begin position="99"/>
        <end position="460"/>
    </location>
</feature>
<sequence length="460" mass="51359">MTEDKSQVKIRFFTREKDELLHVQDTPMYAPISLKRYGLSEIVNHLLGSEKPVPFDFLIEGELLRTSLHDYLTKKGLSSEASLNVEYTRAILPPSYLNSFSNEDWVSSLDVGDGSKHIISGSYDGIVRTWDLSGNVQKQYSGHSGPIRAVKYISNTRLVSAGNDRTLRLWKTKNDDLKLTSQQQAQEDDDDEVNIEDGKTLAILEGHKAPVVSIDVSDNSRILSASYDNSIGFWSTIYKEMTVVDPLEDINNPNNKISTAARKRRKLTMKDGTIRRRAPLSLLESHTAPVEQVIFDSTDNTVGYSVSQDHTIKTWDLVTARCIDTRTTSYSLLSIAQLSTLNLLACGSSARHITLHDPRVGASSKVTQQQLIGHKNFVSSLDTCPENEYILCSGSHDGTVKVWDVRSTSPMYTITREDKSVQKGVNDKVFAVKWAEKVGIISAGQDKKIQINKGDNIFKN</sequence>